<feature type="chain" id="PRO_1000062787" description="Undecaprenyl-diphosphatase">
    <location>
        <begin position="1"/>
        <end position="276"/>
    </location>
</feature>
<feature type="transmembrane region" description="Helical" evidence="1">
    <location>
        <begin position="48"/>
        <end position="68"/>
    </location>
</feature>
<feature type="transmembrane region" description="Helical" evidence="1">
    <location>
        <begin position="92"/>
        <end position="112"/>
    </location>
</feature>
<feature type="transmembrane region" description="Helical" evidence="1">
    <location>
        <begin position="119"/>
        <end position="139"/>
    </location>
</feature>
<feature type="transmembrane region" description="Helical" evidence="1">
    <location>
        <begin position="155"/>
        <end position="175"/>
    </location>
</feature>
<feature type="transmembrane region" description="Helical" evidence="1">
    <location>
        <begin position="196"/>
        <end position="216"/>
    </location>
</feature>
<feature type="transmembrane region" description="Helical" evidence="1">
    <location>
        <begin position="229"/>
        <end position="249"/>
    </location>
</feature>
<feature type="transmembrane region" description="Helical" evidence="1">
    <location>
        <begin position="255"/>
        <end position="275"/>
    </location>
</feature>
<protein>
    <recommendedName>
        <fullName evidence="1">Undecaprenyl-diphosphatase</fullName>
        <ecNumber evidence="1">3.6.1.27</ecNumber>
    </recommendedName>
    <alternativeName>
        <fullName evidence="1">Bacitracin resistance protein</fullName>
    </alternativeName>
    <alternativeName>
        <fullName evidence="1">Undecaprenyl pyrophosphate phosphatase</fullName>
    </alternativeName>
</protein>
<dbReference type="EC" id="3.6.1.27" evidence="1"/>
<dbReference type="EMBL" id="CP000560">
    <property type="protein sequence ID" value="ABS75156.1"/>
    <property type="molecule type" value="Genomic_DNA"/>
</dbReference>
<dbReference type="RefSeq" id="WP_007613337.1">
    <property type="nucleotide sequence ID" value="NC_009725.2"/>
</dbReference>
<dbReference type="SMR" id="A7Z830"/>
<dbReference type="GeneID" id="93081966"/>
<dbReference type="KEGG" id="bay:RBAM_028250"/>
<dbReference type="HOGENOM" id="CLU_060296_2_0_9"/>
<dbReference type="Proteomes" id="UP000001120">
    <property type="component" value="Chromosome"/>
</dbReference>
<dbReference type="GO" id="GO:0005886">
    <property type="term" value="C:plasma membrane"/>
    <property type="evidence" value="ECO:0007669"/>
    <property type="project" value="UniProtKB-SubCell"/>
</dbReference>
<dbReference type="GO" id="GO:0050380">
    <property type="term" value="F:undecaprenyl-diphosphatase activity"/>
    <property type="evidence" value="ECO:0007669"/>
    <property type="project" value="UniProtKB-UniRule"/>
</dbReference>
<dbReference type="GO" id="GO:0071555">
    <property type="term" value="P:cell wall organization"/>
    <property type="evidence" value="ECO:0007669"/>
    <property type="project" value="UniProtKB-KW"/>
</dbReference>
<dbReference type="GO" id="GO:0009252">
    <property type="term" value="P:peptidoglycan biosynthetic process"/>
    <property type="evidence" value="ECO:0007669"/>
    <property type="project" value="UniProtKB-KW"/>
</dbReference>
<dbReference type="GO" id="GO:0008360">
    <property type="term" value="P:regulation of cell shape"/>
    <property type="evidence" value="ECO:0007669"/>
    <property type="project" value="UniProtKB-KW"/>
</dbReference>
<dbReference type="GO" id="GO:0046677">
    <property type="term" value="P:response to antibiotic"/>
    <property type="evidence" value="ECO:0007669"/>
    <property type="project" value="UniProtKB-UniRule"/>
</dbReference>
<dbReference type="HAMAP" id="MF_01006">
    <property type="entry name" value="Undec_diphosphatase"/>
    <property type="match status" value="1"/>
</dbReference>
<dbReference type="InterPro" id="IPR003824">
    <property type="entry name" value="UppP"/>
</dbReference>
<dbReference type="NCBIfam" id="NF001389">
    <property type="entry name" value="PRK00281.1-2"/>
    <property type="match status" value="1"/>
</dbReference>
<dbReference type="NCBIfam" id="NF001390">
    <property type="entry name" value="PRK00281.1-4"/>
    <property type="match status" value="1"/>
</dbReference>
<dbReference type="NCBIfam" id="TIGR00753">
    <property type="entry name" value="undec_PP_bacA"/>
    <property type="match status" value="1"/>
</dbReference>
<dbReference type="PANTHER" id="PTHR30622">
    <property type="entry name" value="UNDECAPRENYL-DIPHOSPHATASE"/>
    <property type="match status" value="1"/>
</dbReference>
<dbReference type="PANTHER" id="PTHR30622:SF3">
    <property type="entry name" value="UNDECAPRENYL-DIPHOSPHATASE"/>
    <property type="match status" value="1"/>
</dbReference>
<dbReference type="Pfam" id="PF02673">
    <property type="entry name" value="BacA"/>
    <property type="match status" value="1"/>
</dbReference>
<gene>
    <name evidence="1" type="primary">uppP</name>
    <name type="ordered locus">RBAM_028250</name>
</gene>
<sequence length="276" mass="30532">MTLWEMFTAAVLGIVEGLTEYAPVSSTGHMIIADDIWLKSGSLMNPEAANSFKVVIQLGSILAVAIVFKDRILHLLGLKKNVTRDQQKGYRLTIAQIAVGLVPAAVLGFLFEDFIDRYLFSVRTVAYGLIAGAVLMLIADWINKRKETIDTVDRITYKQAFCVGLFQCLALWPGFSRSGSTIAGGVIVGLNHRAAADFTFIMAIPIMAGASLLKLVKYWSSLSYDMIPFFLVGFICAFVVALLVVKFFLRLINRIKLVPFAIYRVILGIILIMLVR</sequence>
<organism>
    <name type="scientific">Bacillus velezensis (strain DSM 23117 / BGSC 10A6 / LMG 26770 / FZB42)</name>
    <name type="common">Bacillus amyloliquefaciens subsp. plantarum</name>
    <dbReference type="NCBI Taxonomy" id="326423"/>
    <lineage>
        <taxon>Bacteria</taxon>
        <taxon>Bacillati</taxon>
        <taxon>Bacillota</taxon>
        <taxon>Bacilli</taxon>
        <taxon>Bacillales</taxon>
        <taxon>Bacillaceae</taxon>
        <taxon>Bacillus</taxon>
        <taxon>Bacillus amyloliquefaciens group</taxon>
    </lineage>
</organism>
<evidence type="ECO:0000255" key="1">
    <source>
        <dbReference type="HAMAP-Rule" id="MF_01006"/>
    </source>
</evidence>
<comment type="function">
    <text evidence="1">Catalyzes the dephosphorylation of undecaprenyl diphosphate (UPP). Confers resistance to bacitracin.</text>
</comment>
<comment type="catalytic activity">
    <reaction evidence="1">
        <text>di-trans,octa-cis-undecaprenyl diphosphate + H2O = di-trans,octa-cis-undecaprenyl phosphate + phosphate + H(+)</text>
        <dbReference type="Rhea" id="RHEA:28094"/>
        <dbReference type="ChEBI" id="CHEBI:15377"/>
        <dbReference type="ChEBI" id="CHEBI:15378"/>
        <dbReference type="ChEBI" id="CHEBI:43474"/>
        <dbReference type="ChEBI" id="CHEBI:58405"/>
        <dbReference type="ChEBI" id="CHEBI:60392"/>
        <dbReference type="EC" id="3.6.1.27"/>
    </reaction>
</comment>
<comment type="subcellular location">
    <subcellularLocation>
        <location evidence="1">Cell membrane</location>
        <topology evidence="1">Multi-pass membrane protein</topology>
    </subcellularLocation>
</comment>
<comment type="miscellaneous">
    <text>Bacitracin is thought to be involved in the inhibition of peptidoglycan synthesis by sequestering undecaprenyl diphosphate, thereby reducing the pool of lipid carrier available.</text>
</comment>
<comment type="similarity">
    <text evidence="1">Belongs to the UppP family.</text>
</comment>
<accession>A7Z830</accession>
<name>UPPP_BACVZ</name>
<reference key="1">
    <citation type="journal article" date="2007" name="Nat. Biotechnol.">
        <title>Comparative analysis of the complete genome sequence of the plant growth-promoting bacterium Bacillus amyloliquefaciens FZB42.</title>
        <authorList>
            <person name="Chen X.H."/>
            <person name="Koumoutsi A."/>
            <person name="Scholz R."/>
            <person name="Eisenreich A."/>
            <person name="Schneider K."/>
            <person name="Heinemeyer I."/>
            <person name="Morgenstern B."/>
            <person name="Voss B."/>
            <person name="Hess W.R."/>
            <person name="Reva O."/>
            <person name="Junge H."/>
            <person name="Voigt B."/>
            <person name="Jungblut P.R."/>
            <person name="Vater J."/>
            <person name="Suessmuth R."/>
            <person name="Liesegang H."/>
            <person name="Strittmatter A."/>
            <person name="Gottschalk G."/>
            <person name="Borriss R."/>
        </authorList>
    </citation>
    <scope>NUCLEOTIDE SEQUENCE [LARGE SCALE GENOMIC DNA]</scope>
    <source>
        <strain>DSM 23117 / BGSC 10A6 / LMG 26770 / FZB42</strain>
    </source>
</reference>
<proteinExistence type="inferred from homology"/>
<keyword id="KW-0046">Antibiotic resistance</keyword>
<keyword id="KW-1003">Cell membrane</keyword>
<keyword id="KW-0133">Cell shape</keyword>
<keyword id="KW-0961">Cell wall biogenesis/degradation</keyword>
<keyword id="KW-0378">Hydrolase</keyword>
<keyword id="KW-0472">Membrane</keyword>
<keyword id="KW-0573">Peptidoglycan synthesis</keyword>
<keyword id="KW-0812">Transmembrane</keyword>
<keyword id="KW-1133">Transmembrane helix</keyword>